<comment type="function">
    <text evidence="1">Catalyzes the removal of a penultimate prolyl residue from the N-termini of peptides.</text>
</comment>
<comment type="catalytic activity">
    <reaction>
        <text>Release of any N-terminal amino acid, including proline, that is linked to proline, even from a dipeptide or tripeptide.</text>
        <dbReference type="EC" id="3.4.11.9"/>
    </reaction>
</comment>
<comment type="cofactor">
    <cofactor evidence="1">
        <name>Mn(2+)</name>
        <dbReference type="ChEBI" id="CHEBI:29035"/>
    </cofactor>
    <text evidence="1">Binds 2 manganese ions per subunit.</text>
</comment>
<comment type="similarity">
    <text evidence="2">Belongs to the peptidase M24B family.</text>
</comment>
<evidence type="ECO:0000250" key="1"/>
<evidence type="ECO:0000305" key="2"/>
<organism>
    <name type="scientific">Aspergillus fumigatus (strain ATCC MYA-4609 / CBS 101355 / FGSC A1100 / Af293)</name>
    <name type="common">Neosartorya fumigata</name>
    <dbReference type="NCBI Taxonomy" id="330879"/>
    <lineage>
        <taxon>Eukaryota</taxon>
        <taxon>Fungi</taxon>
        <taxon>Dikarya</taxon>
        <taxon>Ascomycota</taxon>
        <taxon>Pezizomycotina</taxon>
        <taxon>Eurotiomycetes</taxon>
        <taxon>Eurotiomycetidae</taxon>
        <taxon>Eurotiales</taxon>
        <taxon>Aspergillaceae</taxon>
        <taxon>Aspergillus</taxon>
        <taxon>Aspergillus subgen. Fumigati</taxon>
    </lineage>
</organism>
<accession>Q4WRV9</accession>
<sequence length="487" mass="54519">MRGSGRSDIVISAVDALDICITLARNDCDKYPGSVAAKLGVSSGLIYLVGQPTINWGDSDQPRPFRQRRYFYYLSGVEEADCYLTYDIKNDLLTLYVPDFDLHRAIWMGPTLTVKEARERYDVDQVRYHASLKGDIQRWADNYNKTSLLYILHDTQKPQVLSNELRLDDELLLPAMDAARGIKDEHEIRMIREANRVSALAHRKVLENVLRMSTEAEIEGLFLDTCISHGAKNQAYEIIAGSGENAAVLHYVKNNEPLQGRQLVCLDAGAEWNCYASDVTRTFPLAADWPTARARDIYQLVEEMQEECIKRIQKGVRFLDLQVLAHVIAIEGLMRLGILKGGSVEEIRESGASTVFFPHGLGHHVGLEVHDVSAKRLTAVEGDKEYYSSILVPSMSHCPCTLSAPLLEEGMVVTVEPGIYFSRLALANARKLAFAKYINFDEAEKYIPIGGVRIEDDILVTSSGHENLTTAPKGEEMLEIIRRGIDS</sequence>
<protein>
    <recommendedName>
        <fullName>Probable Xaa-Pro aminopeptidase AFUA_1G14920</fullName>
        <ecNumber>3.4.11.9</ecNumber>
    </recommendedName>
    <alternativeName>
        <fullName>Aminoacylproline aminopeptidase</fullName>
    </alternativeName>
    <alternativeName>
        <fullName>Prolidase</fullName>
    </alternativeName>
</protein>
<reference key="1">
    <citation type="journal article" date="2005" name="Nature">
        <title>Genomic sequence of the pathogenic and allergenic filamentous fungus Aspergillus fumigatus.</title>
        <authorList>
            <person name="Nierman W.C."/>
            <person name="Pain A."/>
            <person name="Anderson M.J."/>
            <person name="Wortman J.R."/>
            <person name="Kim H.S."/>
            <person name="Arroyo J."/>
            <person name="Berriman M."/>
            <person name="Abe K."/>
            <person name="Archer D.B."/>
            <person name="Bermejo C."/>
            <person name="Bennett J.W."/>
            <person name="Bowyer P."/>
            <person name="Chen D."/>
            <person name="Collins M."/>
            <person name="Coulsen R."/>
            <person name="Davies R."/>
            <person name="Dyer P.S."/>
            <person name="Farman M.L."/>
            <person name="Fedorova N."/>
            <person name="Fedorova N.D."/>
            <person name="Feldblyum T.V."/>
            <person name="Fischer R."/>
            <person name="Fosker N."/>
            <person name="Fraser A."/>
            <person name="Garcia J.L."/>
            <person name="Garcia M.J."/>
            <person name="Goble A."/>
            <person name="Goldman G.H."/>
            <person name="Gomi K."/>
            <person name="Griffith-Jones S."/>
            <person name="Gwilliam R."/>
            <person name="Haas B.J."/>
            <person name="Haas H."/>
            <person name="Harris D.E."/>
            <person name="Horiuchi H."/>
            <person name="Huang J."/>
            <person name="Humphray S."/>
            <person name="Jimenez J."/>
            <person name="Keller N."/>
            <person name="Khouri H."/>
            <person name="Kitamoto K."/>
            <person name="Kobayashi T."/>
            <person name="Konzack S."/>
            <person name="Kulkarni R."/>
            <person name="Kumagai T."/>
            <person name="Lafton A."/>
            <person name="Latge J.-P."/>
            <person name="Li W."/>
            <person name="Lord A."/>
            <person name="Lu C."/>
            <person name="Majoros W.H."/>
            <person name="May G.S."/>
            <person name="Miller B.L."/>
            <person name="Mohamoud Y."/>
            <person name="Molina M."/>
            <person name="Monod M."/>
            <person name="Mouyna I."/>
            <person name="Mulligan S."/>
            <person name="Murphy L.D."/>
            <person name="O'Neil S."/>
            <person name="Paulsen I."/>
            <person name="Penalva M.A."/>
            <person name="Pertea M."/>
            <person name="Price C."/>
            <person name="Pritchard B.L."/>
            <person name="Quail M.A."/>
            <person name="Rabbinowitsch E."/>
            <person name="Rawlins N."/>
            <person name="Rajandream M.A."/>
            <person name="Reichard U."/>
            <person name="Renauld H."/>
            <person name="Robson G.D."/>
            <person name="Rodriguez de Cordoba S."/>
            <person name="Rodriguez-Pena J.M."/>
            <person name="Ronning C.M."/>
            <person name="Rutter S."/>
            <person name="Salzberg S.L."/>
            <person name="Sanchez M."/>
            <person name="Sanchez-Ferrero J.C."/>
            <person name="Saunders D."/>
            <person name="Seeger K."/>
            <person name="Squares R."/>
            <person name="Squares S."/>
            <person name="Takeuchi M."/>
            <person name="Tekaia F."/>
            <person name="Turner G."/>
            <person name="Vazquez de Aldana C.R."/>
            <person name="Weidman J."/>
            <person name="White O."/>
            <person name="Woodward J.R."/>
            <person name="Yu J.-H."/>
            <person name="Fraser C.M."/>
            <person name="Galagan J.E."/>
            <person name="Asai K."/>
            <person name="Machida M."/>
            <person name="Hall N."/>
            <person name="Barrell B.G."/>
            <person name="Denning D.W."/>
        </authorList>
    </citation>
    <scope>NUCLEOTIDE SEQUENCE [LARGE SCALE GENOMIC DNA]</scope>
    <source>
        <strain>ATCC MYA-4609 / CBS 101355 / FGSC A1100 / Af293</strain>
    </source>
</reference>
<gene>
    <name type="ORF">AFUA_1G14920</name>
</gene>
<keyword id="KW-0031">Aminopeptidase</keyword>
<keyword id="KW-0378">Hydrolase</keyword>
<keyword id="KW-0464">Manganese</keyword>
<keyword id="KW-0479">Metal-binding</keyword>
<keyword id="KW-0482">Metalloprotease</keyword>
<keyword id="KW-0645">Protease</keyword>
<keyword id="KW-1185">Reference proteome</keyword>
<dbReference type="EC" id="3.4.11.9"/>
<dbReference type="EMBL" id="AAHF01000004">
    <property type="protein sequence ID" value="EAL90823.1"/>
    <property type="molecule type" value="Genomic_DNA"/>
</dbReference>
<dbReference type="RefSeq" id="XP_752861.1">
    <property type="nucleotide sequence ID" value="XM_747768.1"/>
</dbReference>
<dbReference type="SMR" id="Q4WRV9"/>
<dbReference type="STRING" id="330879.Q4WRV9"/>
<dbReference type="EnsemblFungi" id="EAL90823">
    <property type="protein sequence ID" value="EAL90823"/>
    <property type="gene ID" value="AFUA_1G14920"/>
</dbReference>
<dbReference type="GeneID" id="3509884"/>
<dbReference type="KEGG" id="afm:AFUA_1G14920"/>
<dbReference type="eggNOG" id="KOG2737">
    <property type="taxonomic scope" value="Eukaryota"/>
</dbReference>
<dbReference type="HOGENOM" id="CLU_017266_1_2_1"/>
<dbReference type="InParanoid" id="Q4WRV9"/>
<dbReference type="OMA" id="YELRMIR"/>
<dbReference type="OrthoDB" id="10261878at2759"/>
<dbReference type="Proteomes" id="UP000002530">
    <property type="component" value="Chromosome 1"/>
</dbReference>
<dbReference type="GO" id="GO:0030145">
    <property type="term" value="F:manganese ion binding"/>
    <property type="evidence" value="ECO:0007669"/>
    <property type="project" value="InterPro"/>
</dbReference>
<dbReference type="GO" id="GO:0070006">
    <property type="term" value="F:metalloaminopeptidase activity"/>
    <property type="evidence" value="ECO:0007669"/>
    <property type="project" value="InterPro"/>
</dbReference>
<dbReference type="GO" id="GO:0008233">
    <property type="term" value="F:peptidase activity"/>
    <property type="evidence" value="ECO:0000318"/>
    <property type="project" value="GO_Central"/>
</dbReference>
<dbReference type="GO" id="GO:0006508">
    <property type="term" value="P:proteolysis"/>
    <property type="evidence" value="ECO:0000318"/>
    <property type="project" value="GO_Central"/>
</dbReference>
<dbReference type="CDD" id="cd01087">
    <property type="entry name" value="Prolidase"/>
    <property type="match status" value="1"/>
</dbReference>
<dbReference type="Gene3D" id="3.90.230.10">
    <property type="entry name" value="Creatinase/methionine aminopeptidase superfamily"/>
    <property type="match status" value="1"/>
</dbReference>
<dbReference type="Gene3D" id="3.40.350.10">
    <property type="entry name" value="Creatinase/prolidase N-terminal domain"/>
    <property type="match status" value="1"/>
</dbReference>
<dbReference type="InterPro" id="IPR007865">
    <property type="entry name" value="Aminopep_P_N"/>
</dbReference>
<dbReference type="InterPro" id="IPR029149">
    <property type="entry name" value="Creatin/AminoP/Spt16_N"/>
</dbReference>
<dbReference type="InterPro" id="IPR036005">
    <property type="entry name" value="Creatinase/aminopeptidase-like"/>
</dbReference>
<dbReference type="InterPro" id="IPR000994">
    <property type="entry name" value="Pept_M24"/>
</dbReference>
<dbReference type="InterPro" id="IPR001131">
    <property type="entry name" value="Peptidase_M24B_aminopep-P_CS"/>
</dbReference>
<dbReference type="InterPro" id="IPR052433">
    <property type="entry name" value="X-Pro_dipept-like"/>
</dbReference>
<dbReference type="PANTHER" id="PTHR43226">
    <property type="entry name" value="XAA-PRO AMINOPEPTIDASE 3"/>
    <property type="match status" value="1"/>
</dbReference>
<dbReference type="PANTHER" id="PTHR43226:SF3">
    <property type="entry name" value="XAA-PRO AMINOPEPTIDASE AN0832-RELATED"/>
    <property type="match status" value="1"/>
</dbReference>
<dbReference type="Pfam" id="PF05195">
    <property type="entry name" value="AMP_N"/>
    <property type="match status" value="1"/>
</dbReference>
<dbReference type="Pfam" id="PF00557">
    <property type="entry name" value="Peptidase_M24"/>
    <property type="match status" value="1"/>
</dbReference>
<dbReference type="SMART" id="SM01011">
    <property type="entry name" value="AMP_N"/>
    <property type="match status" value="1"/>
</dbReference>
<dbReference type="SUPFAM" id="SSF55920">
    <property type="entry name" value="Creatinase/aminopeptidase"/>
    <property type="match status" value="1"/>
</dbReference>
<dbReference type="SUPFAM" id="SSF53092">
    <property type="entry name" value="Creatinase/prolidase N-terminal domain"/>
    <property type="match status" value="1"/>
</dbReference>
<dbReference type="PROSITE" id="PS00491">
    <property type="entry name" value="PROLINE_PEPTIDASE"/>
    <property type="match status" value="1"/>
</dbReference>
<feature type="chain" id="PRO_0000411826" description="Probable Xaa-Pro aminopeptidase AFUA_1G14920">
    <location>
        <begin position="1"/>
        <end position="487"/>
    </location>
</feature>
<feature type="binding site" evidence="1">
    <location>
        <position position="267"/>
    </location>
    <ligand>
        <name>Mn(2+)</name>
        <dbReference type="ChEBI" id="CHEBI:29035"/>
        <label>2</label>
    </ligand>
</feature>
<feature type="binding site" evidence="1">
    <location>
        <position position="278"/>
    </location>
    <ligand>
        <name>Mn(2+)</name>
        <dbReference type="ChEBI" id="CHEBI:29035"/>
        <label>1</label>
    </ligand>
</feature>
<feature type="binding site" evidence="1">
    <location>
        <position position="278"/>
    </location>
    <ligand>
        <name>Mn(2+)</name>
        <dbReference type="ChEBI" id="CHEBI:29035"/>
        <label>2</label>
    </ligand>
</feature>
<feature type="binding site" evidence="1">
    <location>
        <position position="416"/>
    </location>
    <ligand>
        <name>Mn(2+)</name>
        <dbReference type="ChEBI" id="CHEBI:29035"/>
        <label>1</label>
    </ligand>
</feature>
<feature type="binding site" evidence="1">
    <location>
        <position position="455"/>
    </location>
    <ligand>
        <name>Mn(2+)</name>
        <dbReference type="ChEBI" id="CHEBI:29035"/>
        <label>1</label>
    </ligand>
</feature>
<feature type="binding site" evidence="1">
    <location>
        <position position="455"/>
    </location>
    <ligand>
        <name>Mn(2+)</name>
        <dbReference type="ChEBI" id="CHEBI:29035"/>
        <label>2</label>
    </ligand>
</feature>
<name>AMPP2_ASPFU</name>
<proteinExistence type="inferred from homology"/>